<reference key="1">
    <citation type="submission" date="2007-05" db="EMBL/GenBank/DDBJ databases">
        <title>Complete sequence of Pseudomonas putida F1.</title>
        <authorList>
            <consortium name="US DOE Joint Genome Institute"/>
            <person name="Copeland A."/>
            <person name="Lucas S."/>
            <person name="Lapidus A."/>
            <person name="Barry K."/>
            <person name="Detter J.C."/>
            <person name="Glavina del Rio T."/>
            <person name="Hammon N."/>
            <person name="Israni S."/>
            <person name="Dalin E."/>
            <person name="Tice H."/>
            <person name="Pitluck S."/>
            <person name="Chain P."/>
            <person name="Malfatti S."/>
            <person name="Shin M."/>
            <person name="Vergez L."/>
            <person name="Schmutz J."/>
            <person name="Larimer F."/>
            <person name="Land M."/>
            <person name="Hauser L."/>
            <person name="Kyrpides N."/>
            <person name="Lykidis A."/>
            <person name="Parales R."/>
            <person name="Richardson P."/>
        </authorList>
    </citation>
    <scope>NUCLEOTIDE SEQUENCE [LARGE SCALE GENOMIC DNA]</scope>
    <source>
        <strain>ATCC 700007 / DSM 6899 / JCM 31910 / BCRC 17059 / LMG 24140 / F1</strain>
    </source>
</reference>
<protein>
    <recommendedName>
        <fullName evidence="1">NH(3)-dependent NAD(+) synthetase</fullName>
        <ecNumber evidence="1">6.3.1.5</ecNumber>
    </recommendedName>
</protein>
<sequence length="275" mass="29258">MQAVQQEIAQALKVQPPFANAAALEAEVARRVAFIKDCLANARLKTLVLGISGGVDSLTAALLAQRAINELRAETGDKAYTFIAVRLPYQVQHDEHDAQACLDVIKADEVHTVDIAPAVRALAAEVAALKNGSPTLVDFVVGNVKARTRMVAQYTIAGARAGLVIGTDHAAEAVMGFFTKFGDGACDLAPLSGLVKNQVRAIARSFGAPESLVEKVPTADLEDLEPGKPDEASHGVTYAQIDAFLHGQPVDQAAFDIIVATYRKTQHKRELPFAP</sequence>
<feature type="chain" id="PRO_1000077586" description="NH(3)-dependent NAD(+) synthetase">
    <location>
        <begin position="1"/>
        <end position="275"/>
    </location>
</feature>
<feature type="binding site" evidence="1">
    <location>
        <begin position="50"/>
        <end position="57"/>
    </location>
    <ligand>
        <name>ATP</name>
        <dbReference type="ChEBI" id="CHEBI:30616"/>
    </ligand>
</feature>
<feature type="binding site" evidence="1">
    <location>
        <position position="56"/>
    </location>
    <ligand>
        <name>Mg(2+)</name>
        <dbReference type="ChEBI" id="CHEBI:18420"/>
    </ligand>
</feature>
<feature type="binding site" evidence="1">
    <location>
        <position position="147"/>
    </location>
    <ligand>
        <name>deamido-NAD(+)</name>
        <dbReference type="ChEBI" id="CHEBI:58437"/>
    </ligand>
</feature>
<feature type="binding site" evidence="1">
    <location>
        <position position="167"/>
    </location>
    <ligand>
        <name>ATP</name>
        <dbReference type="ChEBI" id="CHEBI:30616"/>
    </ligand>
</feature>
<feature type="binding site" evidence="1">
    <location>
        <position position="172"/>
    </location>
    <ligand>
        <name>Mg(2+)</name>
        <dbReference type="ChEBI" id="CHEBI:18420"/>
    </ligand>
</feature>
<feature type="binding site" evidence="1">
    <location>
        <position position="180"/>
    </location>
    <ligand>
        <name>deamido-NAD(+)</name>
        <dbReference type="ChEBI" id="CHEBI:58437"/>
    </ligand>
</feature>
<feature type="binding site" evidence="1">
    <location>
        <position position="187"/>
    </location>
    <ligand>
        <name>deamido-NAD(+)</name>
        <dbReference type="ChEBI" id="CHEBI:58437"/>
    </ligand>
</feature>
<feature type="binding site" evidence="1">
    <location>
        <position position="196"/>
    </location>
    <ligand>
        <name>ATP</name>
        <dbReference type="ChEBI" id="CHEBI:30616"/>
    </ligand>
</feature>
<feature type="binding site" evidence="1">
    <location>
        <position position="218"/>
    </location>
    <ligand>
        <name>ATP</name>
        <dbReference type="ChEBI" id="CHEBI:30616"/>
    </ligand>
</feature>
<feature type="binding site" evidence="1">
    <location>
        <begin position="267"/>
        <end position="268"/>
    </location>
    <ligand>
        <name>deamido-NAD(+)</name>
        <dbReference type="ChEBI" id="CHEBI:58437"/>
    </ligand>
</feature>
<keyword id="KW-0067">ATP-binding</keyword>
<keyword id="KW-0436">Ligase</keyword>
<keyword id="KW-0460">Magnesium</keyword>
<keyword id="KW-0479">Metal-binding</keyword>
<keyword id="KW-0520">NAD</keyword>
<keyword id="KW-0547">Nucleotide-binding</keyword>
<dbReference type="EC" id="6.3.1.5" evidence="1"/>
<dbReference type="EMBL" id="CP000712">
    <property type="protein sequence ID" value="ABQ80867.1"/>
    <property type="molecule type" value="Genomic_DNA"/>
</dbReference>
<dbReference type="SMR" id="A5W9Q7"/>
<dbReference type="KEGG" id="ppf:Pput_4747"/>
<dbReference type="eggNOG" id="COG0171">
    <property type="taxonomic scope" value="Bacteria"/>
</dbReference>
<dbReference type="HOGENOM" id="CLU_059327_3_0_6"/>
<dbReference type="UniPathway" id="UPA00253">
    <property type="reaction ID" value="UER00333"/>
</dbReference>
<dbReference type="GO" id="GO:0005737">
    <property type="term" value="C:cytoplasm"/>
    <property type="evidence" value="ECO:0007669"/>
    <property type="project" value="InterPro"/>
</dbReference>
<dbReference type="GO" id="GO:0005524">
    <property type="term" value="F:ATP binding"/>
    <property type="evidence" value="ECO:0007669"/>
    <property type="project" value="UniProtKB-UniRule"/>
</dbReference>
<dbReference type="GO" id="GO:0004359">
    <property type="term" value="F:glutaminase activity"/>
    <property type="evidence" value="ECO:0007669"/>
    <property type="project" value="InterPro"/>
</dbReference>
<dbReference type="GO" id="GO:0046872">
    <property type="term" value="F:metal ion binding"/>
    <property type="evidence" value="ECO:0007669"/>
    <property type="project" value="UniProtKB-KW"/>
</dbReference>
<dbReference type="GO" id="GO:0003952">
    <property type="term" value="F:NAD+ synthase (glutamine-hydrolyzing) activity"/>
    <property type="evidence" value="ECO:0007669"/>
    <property type="project" value="InterPro"/>
</dbReference>
<dbReference type="GO" id="GO:0008795">
    <property type="term" value="F:NAD+ synthase activity"/>
    <property type="evidence" value="ECO:0007669"/>
    <property type="project" value="UniProtKB-UniRule"/>
</dbReference>
<dbReference type="GO" id="GO:0009435">
    <property type="term" value="P:NAD biosynthetic process"/>
    <property type="evidence" value="ECO:0007669"/>
    <property type="project" value="UniProtKB-UniRule"/>
</dbReference>
<dbReference type="CDD" id="cd00553">
    <property type="entry name" value="NAD_synthase"/>
    <property type="match status" value="1"/>
</dbReference>
<dbReference type="Gene3D" id="3.40.50.620">
    <property type="entry name" value="HUPs"/>
    <property type="match status" value="1"/>
</dbReference>
<dbReference type="HAMAP" id="MF_00193">
    <property type="entry name" value="NadE_ammonia_dep"/>
    <property type="match status" value="1"/>
</dbReference>
<dbReference type="InterPro" id="IPR022310">
    <property type="entry name" value="NAD/GMP_synthase"/>
</dbReference>
<dbReference type="InterPro" id="IPR003694">
    <property type="entry name" value="NAD_synthase"/>
</dbReference>
<dbReference type="InterPro" id="IPR022926">
    <property type="entry name" value="NH(3)-dep_NAD(+)_synth"/>
</dbReference>
<dbReference type="InterPro" id="IPR014729">
    <property type="entry name" value="Rossmann-like_a/b/a_fold"/>
</dbReference>
<dbReference type="NCBIfam" id="TIGR00552">
    <property type="entry name" value="nadE"/>
    <property type="match status" value="1"/>
</dbReference>
<dbReference type="NCBIfam" id="NF001979">
    <property type="entry name" value="PRK00768.1"/>
    <property type="match status" value="1"/>
</dbReference>
<dbReference type="PANTHER" id="PTHR23090">
    <property type="entry name" value="NH 3 /GLUTAMINE-DEPENDENT NAD + SYNTHETASE"/>
    <property type="match status" value="1"/>
</dbReference>
<dbReference type="PANTHER" id="PTHR23090:SF7">
    <property type="entry name" value="NH(3)-DEPENDENT NAD(+) SYNTHETASE"/>
    <property type="match status" value="1"/>
</dbReference>
<dbReference type="Pfam" id="PF02540">
    <property type="entry name" value="NAD_synthase"/>
    <property type="match status" value="1"/>
</dbReference>
<dbReference type="SUPFAM" id="SSF52402">
    <property type="entry name" value="Adenine nucleotide alpha hydrolases-like"/>
    <property type="match status" value="1"/>
</dbReference>
<organism>
    <name type="scientific">Pseudomonas putida (strain ATCC 700007 / DSM 6899 / JCM 31910 / BCRC 17059 / LMG 24140 / F1)</name>
    <dbReference type="NCBI Taxonomy" id="351746"/>
    <lineage>
        <taxon>Bacteria</taxon>
        <taxon>Pseudomonadati</taxon>
        <taxon>Pseudomonadota</taxon>
        <taxon>Gammaproteobacteria</taxon>
        <taxon>Pseudomonadales</taxon>
        <taxon>Pseudomonadaceae</taxon>
        <taxon>Pseudomonas</taxon>
    </lineage>
</organism>
<name>NADE_PSEP1</name>
<accession>A5W9Q7</accession>
<comment type="function">
    <text evidence="1">Catalyzes the ATP-dependent amidation of deamido-NAD to form NAD. Uses ammonia as a nitrogen source.</text>
</comment>
<comment type="catalytic activity">
    <reaction evidence="1">
        <text>deamido-NAD(+) + NH4(+) + ATP = AMP + diphosphate + NAD(+) + H(+)</text>
        <dbReference type="Rhea" id="RHEA:21188"/>
        <dbReference type="ChEBI" id="CHEBI:15378"/>
        <dbReference type="ChEBI" id="CHEBI:28938"/>
        <dbReference type="ChEBI" id="CHEBI:30616"/>
        <dbReference type="ChEBI" id="CHEBI:33019"/>
        <dbReference type="ChEBI" id="CHEBI:57540"/>
        <dbReference type="ChEBI" id="CHEBI:58437"/>
        <dbReference type="ChEBI" id="CHEBI:456215"/>
        <dbReference type="EC" id="6.3.1.5"/>
    </reaction>
</comment>
<comment type="pathway">
    <text evidence="1">Cofactor biosynthesis; NAD(+) biosynthesis; NAD(+) from deamido-NAD(+) (ammonia route): step 1/1.</text>
</comment>
<comment type="subunit">
    <text evidence="1">Homodimer.</text>
</comment>
<comment type="similarity">
    <text evidence="1">Belongs to the NAD synthetase family.</text>
</comment>
<evidence type="ECO:0000255" key="1">
    <source>
        <dbReference type="HAMAP-Rule" id="MF_00193"/>
    </source>
</evidence>
<gene>
    <name evidence="1" type="primary">nadE</name>
    <name type="ordered locus">Pput_4747</name>
</gene>
<proteinExistence type="inferred from homology"/>